<feature type="chain" id="PRO_0000156176" description="Phosphopantetheine adenylyltransferase">
    <location>
        <begin position="1"/>
        <end position="169"/>
    </location>
</feature>
<feature type="binding site" evidence="1">
    <location>
        <begin position="9"/>
        <end position="10"/>
    </location>
    <ligand>
        <name>ATP</name>
        <dbReference type="ChEBI" id="CHEBI:30616"/>
    </ligand>
</feature>
<feature type="binding site" evidence="1">
    <location>
        <position position="9"/>
    </location>
    <ligand>
        <name>substrate</name>
    </ligand>
</feature>
<feature type="binding site" evidence="1">
    <location>
        <position position="17"/>
    </location>
    <ligand>
        <name>ATP</name>
        <dbReference type="ChEBI" id="CHEBI:30616"/>
    </ligand>
</feature>
<feature type="binding site" evidence="1">
    <location>
        <position position="41"/>
    </location>
    <ligand>
        <name>substrate</name>
    </ligand>
</feature>
<feature type="binding site" evidence="1">
    <location>
        <position position="73"/>
    </location>
    <ligand>
        <name>substrate</name>
    </ligand>
</feature>
<feature type="binding site" evidence="1">
    <location>
        <position position="87"/>
    </location>
    <ligand>
        <name>substrate</name>
    </ligand>
</feature>
<feature type="binding site" evidence="1">
    <location>
        <begin position="88"/>
        <end position="90"/>
    </location>
    <ligand>
        <name>ATP</name>
        <dbReference type="ChEBI" id="CHEBI:30616"/>
    </ligand>
</feature>
<feature type="binding site" evidence="1">
    <location>
        <position position="98"/>
    </location>
    <ligand>
        <name>ATP</name>
        <dbReference type="ChEBI" id="CHEBI:30616"/>
    </ligand>
</feature>
<feature type="binding site" evidence="1">
    <location>
        <begin position="123"/>
        <end position="129"/>
    </location>
    <ligand>
        <name>ATP</name>
        <dbReference type="ChEBI" id="CHEBI:30616"/>
    </ligand>
</feature>
<feature type="site" description="Transition state stabilizer" evidence="1">
    <location>
        <position position="17"/>
    </location>
</feature>
<comment type="function">
    <text evidence="1">Reversibly transfers an adenylyl group from ATP to 4'-phosphopantetheine, yielding dephospho-CoA (dPCoA) and pyrophosphate.</text>
</comment>
<comment type="catalytic activity">
    <reaction evidence="1">
        <text>(R)-4'-phosphopantetheine + ATP + H(+) = 3'-dephospho-CoA + diphosphate</text>
        <dbReference type="Rhea" id="RHEA:19801"/>
        <dbReference type="ChEBI" id="CHEBI:15378"/>
        <dbReference type="ChEBI" id="CHEBI:30616"/>
        <dbReference type="ChEBI" id="CHEBI:33019"/>
        <dbReference type="ChEBI" id="CHEBI:57328"/>
        <dbReference type="ChEBI" id="CHEBI:61723"/>
        <dbReference type="EC" id="2.7.7.3"/>
    </reaction>
</comment>
<comment type="cofactor">
    <cofactor evidence="1">
        <name>Mg(2+)</name>
        <dbReference type="ChEBI" id="CHEBI:18420"/>
    </cofactor>
</comment>
<comment type="pathway">
    <text evidence="1">Cofactor biosynthesis; coenzyme A biosynthesis; CoA from (R)-pantothenate: step 4/5.</text>
</comment>
<comment type="subunit">
    <text evidence="1">Homohexamer.</text>
</comment>
<comment type="subcellular location">
    <subcellularLocation>
        <location evidence="1">Cytoplasm</location>
    </subcellularLocation>
</comment>
<comment type="similarity">
    <text evidence="1">Belongs to the bacterial CoaD family.</text>
</comment>
<reference key="1">
    <citation type="journal article" date="2003" name="Nat. Genet.">
        <title>Comparative analysis of the genome sequences of Bordetella pertussis, Bordetella parapertussis and Bordetella bronchiseptica.</title>
        <authorList>
            <person name="Parkhill J."/>
            <person name="Sebaihia M."/>
            <person name="Preston A."/>
            <person name="Murphy L.D."/>
            <person name="Thomson N.R."/>
            <person name="Harris D.E."/>
            <person name="Holden M.T.G."/>
            <person name="Churcher C.M."/>
            <person name="Bentley S.D."/>
            <person name="Mungall K.L."/>
            <person name="Cerdeno-Tarraga A.-M."/>
            <person name="Temple L."/>
            <person name="James K.D."/>
            <person name="Harris B."/>
            <person name="Quail M.A."/>
            <person name="Achtman M."/>
            <person name="Atkin R."/>
            <person name="Baker S."/>
            <person name="Basham D."/>
            <person name="Bason N."/>
            <person name="Cherevach I."/>
            <person name="Chillingworth T."/>
            <person name="Collins M."/>
            <person name="Cronin A."/>
            <person name="Davis P."/>
            <person name="Doggett J."/>
            <person name="Feltwell T."/>
            <person name="Goble A."/>
            <person name="Hamlin N."/>
            <person name="Hauser H."/>
            <person name="Holroyd S."/>
            <person name="Jagels K."/>
            <person name="Leather S."/>
            <person name="Moule S."/>
            <person name="Norberczak H."/>
            <person name="O'Neil S."/>
            <person name="Ormond D."/>
            <person name="Price C."/>
            <person name="Rabbinowitsch E."/>
            <person name="Rutter S."/>
            <person name="Sanders M."/>
            <person name="Saunders D."/>
            <person name="Seeger K."/>
            <person name="Sharp S."/>
            <person name="Simmonds M."/>
            <person name="Skelton J."/>
            <person name="Squares R."/>
            <person name="Squares S."/>
            <person name="Stevens K."/>
            <person name="Unwin L."/>
            <person name="Whitehead S."/>
            <person name="Barrell B.G."/>
            <person name="Maskell D.J."/>
        </authorList>
    </citation>
    <scope>NUCLEOTIDE SEQUENCE [LARGE SCALE GENOMIC DNA]</scope>
    <source>
        <strain>ATCC BAA-588 / NCTC 13252 / RB50</strain>
    </source>
</reference>
<name>COAD_BORBR</name>
<protein>
    <recommendedName>
        <fullName evidence="1">Phosphopantetheine adenylyltransferase</fullName>
        <ecNumber evidence="1">2.7.7.3</ecNumber>
    </recommendedName>
    <alternativeName>
        <fullName evidence="1">Dephospho-CoA pyrophosphorylase</fullName>
    </alternativeName>
    <alternativeName>
        <fullName evidence="1">Pantetheine-phosphate adenylyltransferase</fullName>
        <shortName evidence="1">PPAT</shortName>
    </alternativeName>
</protein>
<organism>
    <name type="scientific">Bordetella bronchiseptica (strain ATCC BAA-588 / NCTC 13252 / RB50)</name>
    <name type="common">Alcaligenes bronchisepticus</name>
    <dbReference type="NCBI Taxonomy" id="257310"/>
    <lineage>
        <taxon>Bacteria</taxon>
        <taxon>Pseudomonadati</taxon>
        <taxon>Pseudomonadota</taxon>
        <taxon>Betaproteobacteria</taxon>
        <taxon>Burkholderiales</taxon>
        <taxon>Alcaligenaceae</taxon>
        <taxon>Bordetella</taxon>
    </lineage>
</organism>
<gene>
    <name evidence="1" type="primary">coaD</name>
    <name type="ordered locus">BB0941</name>
</gene>
<keyword id="KW-0067">ATP-binding</keyword>
<keyword id="KW-0173">Coenzyme A biosynthesis</keyword>
<keyword id="KW-0963">Cytoplasm</keyword>
<keyword id="KW-0460">Magnesium</keyword>
<keyword id="KW-0547">Nucleotide-binding</keyword>
<keyword id="KW-0548">Nucleotidyltransferase</keyword>
<keyword id="KW-0808">Transferase</keyword>
<sequence>MIIAVYPGTFDPLTRGHEDLVRRAATLFDKVVVGIAHSRNKKPFFTIEERVDIAREVLGHYPNVEVHSFGGLLKDFVRDQNGRVIIRGLRAVSDFEYEFQMAGMNRHLLPDVETMFMTPSDQYQFISGTIVREIAQLGGDVSKFVFPSVERWLQAKAKERREQSAQGGA</sequence>
<evidence type="ECO:0000255" key="1">
    <source>
        <dbReference type="HAMAP-Rule" id="MF_00151"/>
    </source>
</evidence>
<accession>Q7WNU4</accession>
<proteinExistence type="inferred from homology"/>
<dbReference type="EC" id="2.7.7.3" evidence="1"/>
<dbReference type="EMBL" id="BX640439">
    <property type="protein sequence ID" value="CAE31440.1"/>
    <property type="molecule type" value="Genomic_DNA"/>
</dbReference>
<dbReference type="RefSeq" id="WP_003808574.1">
    <property type="nucleotide sequence ID" value="NC_002927.3"/>
</dbReference>
<dbReference type="SMR" id="Q7WNU4"/>
<dbReference type="GeneID" id="93202597"/>
<dbReference type="KEGG" id="bbr:BB0941"/>
<dbReference type="eggNOG" id="COG0669">
    <property type="taxonomic scope" value="Bacteria"/>
</dbReference>
<dbReference type="HOGENOM" id="CLU_100149_0_1_4"/>
<dbReference type="UniPathway" id="UPA00241">
    <property type="reaction ID" value="UER00355"/>
</dbReference>
<dbReference type="Proteomes" id="UP000001027">
    <property type="component" value="Chromosome"/>
</dbReference>
<dbReference type="GO" id="GO:0005737">
    <property type="term" value="C:cytoplasm"/>
    <property type="evidence" value="ECO:0007669"/>
    <property type="project" value="UniProtKB-SubCell"/>
</dbReference>
<dbReference type="GO" id="GO:0005524">
    <property type="term" value="F:ATP binding"/>
    <property type="evidence" value="ECO:0007669"/>
    <property type="project" value="UniProtKB-KW"/>
</dbReference>
<dbReference type="GO" id="GO:0004595">
    <property type="term" value="F:pantetheine-phosphate adenylyltransferase activity"/>
    <property type="evidence" value="ECO:0007669"/>
    <property type="project" value="UniProtKB-UniRule"/>
</dbReference>
<dbReference type="GO" id="GO:0015937">
    <property type="term" value="P:coenzyme A biosynthetic process"/>
    <property type="evidence" value="ECO:0007669"/>
    <property type="project" value="UniProtKB-UniRule"/>
</dbReference>
<dbReference type="CDD" id="cd02163">
    <property type="entry name" value="PPAT"/>
    <property type="match status" value="1"/>
</dbReference>
<dbReference type="Gene3D" id="3.40.50.620">
    <property type="entry name" value="HUPs"/>
    <property type="match status" value="1"/>
</dbReference>
<dbReference type="HAMAP" id="MF_00151">
    <property type="entry name" value="PPAT_bact"/>
    <property type="match status" value="1"/>
</dbReference>
<dbReference type="InterPro" id="IPR004821">
    <property type="entry name" value="Cyt_trans-like"/>
</dbReference>
<dbReference type="InterPro" id="IPR001980">
    <property type="entry name" value="PPAT"/>
</dbReference>
<dbReference type="InterPro" id="IPR014729">
    <property type="entry name" value="Rossmann-like_a/b/a_fold"/>
</dbReference>
<dbReference type="NCBIfam" id="TIGR01510">
    <property type="entry name" value="coaD_prev_kdtB"/>
    <property type="match status" value="1"/>
</dbReference>
<dbReference type="NCBIfam" id="TIGR00125">
    <property type="entry name" value="cyt_tran_rel"/>
    <property type="match status" value="1"/>
</dbReference>
<dbReference type="PANTHER" id="PTHR21342">
    <property type="entry name" value="PHOSPHOPANTETHEINE ADENYLYLTRANSFERASE"/>
    <property type="match status" value="1"/>
</dbReference>
<dbReference type="PANTHER" id="PTHR21342:SF1">
    <property type="entry name" value="PHOSPHOPANTETHEINE ADENYLYLTRANSFERASE"/>
    <property type="match status" value="1"/>
</dbReference>
<dbReference type="Pfam" id="PF01467">
    <property type="entry name" value="CTP_transf_like"/>
    <property type="match status" value="1"/>
</dbReference>
<dbReference type="PRINTS" id="PR01020">
    <property type="entry name" value="LPSBIOSNTHSS"/>
</dbReference>
<dbReference type="SUPFAM" id="SSF52374">
    <property type="entry name" value="Nucleotidylyl transferase"/>
    <property type="match status" value="1"/>
</dbReference>